<organism>
    <name type="scientific">Xanthomonas campestris pv. campestris (strain B100)</name>
    <dbReference type="NCBI Taxonomy" id="509169"/>
    <lineage>
        <taxon>Bacteria</taxon>
        <taxon>Pseudomonadati</taxon>
        <taxon>Pseudomonadota</taxon>
        <taxon>Gammaproteobacteria</taxon>
        <taxon>Lysobacterales</taxon>
        <taxon>Lysobacteraceae</taxon>
        <taxon>Xanthomonas</taxon>
    </lineage>
</organism>
<sequence length="396" mass="41085">MSGSSLRRVAVFGATGSIGASALDVIARHPERLRASVLSAGSKVDALLALCVQHRPAHAVIADAALYPTLRDGLHDAGLTTQAHAGDQALDALAASDACDTVVAAIVGAAGLSSTLAAAAAGKRLLLANKESLVLAGELLTRTAAAAGAEIIPIDSEHSAIFQCLRSCDASRGVRRVILTASGGPFRGRQRAQLAEVTPAQAVAHPKWSMGPKISVDSATLMNKGLEVIEAHHLFGLPGEQIDVLVHPQSLVHSLVEFVDGSTLAQLGLPDMRTTLAVGLAWPERVESGVGGLDLLQQGRLDFEAPDTGAFPCLRLAWDALRAGGTAPAILNAANEVAVSAFLQGKVGFLAIPALVEHTLTTLQRQNADTLNTLLFADAEARRTTERALAHHSLHA</sequence>
<comment type="function">
    <text evidence="1">Catalyzes the NADPH-dependent rearrangement and reduction of 1-deoxy-D-xylulose-5-phosphate (DXP) to 2-C-methyl-D-erythritol 4-phosphate (MEP).</text>
</comment>
<comment type="catalytic activity">
    <reaction evidence="1">
        <text>2-C-methyl-D-erythritol 4-phosphate + NADP(+) = 1-deoxy-D-xylulose 5-phosphate + NADPH + H(+)</text>
        <dbReference type="Rhea" id="RHEA:13717"/>
        <dbReference type="ChEBI" id="CHEBI:15378"/>
        <dbReference type="ChEBI" id="CHEBI:57783"/>
        <dbReference type="ChEBI" id="CHEBI:57792"/>
        <dbReference type="ChEBI" id="CHEBI:58262"/>
        <dbReference type="ChEBI" id="CHEBI:58349"/>
        <dbReference type="EC" id="1.1.1.267"/>
    </reaction>
    <physiologicalReaction direction="right-to-left" evidence="1">
        <dbReference type="Rhea" id="RHEA:13719"/>
    </physiologicalReaction>
</comment>
<comment type="cofactor">
    <cofactor evidence="1">
        <name>Mg(2+)</name>
        <dbReference type="ChEBI" id="CHEBI:18420"/>
    </cofactor>
    <cofactor evidence="1">
        <name>Mn(2+)</name>
        <dbReference type="ChEBI" id="CHEBI:29035"/>
    </cofactor>
</comment>
<comment type="pathway">
    <text evidence="1">Isoprenoid biosynthesis; isopentenyl diphosphate biosynthesis via DXP pathway; isopentenyl diphosphate from 1-deoxy-D-xylulose 5-phosphate: step 1/6.</text>
</comment>
<comment type="similarity">
    <text evidence="1">Belongs to the DXR family.</text>
</comment>
<feature type="chain" id="PRO_1000098526" description="1-deoxy-D-xylulose 5-phosphate reductoisomerase">
    <location>
        <begin position="1"/>
        <end position="396"/>
    </location>
</feature>
<feature type="binding site" evidence="1">
    <location>
        <position position="15"/>
    </location>
    <ligand>
        <name>NADPH</name>
        <dbReference type="ChEBI" id="CHEBI:57783"/>
    </ligand>
</feature>
<feature type="binding site" evidence="1">
    <location>
        <position position="16"/>
    </location>
    <ligand>
        <name>NADPH</name>
        <dbReference type="ChEBI" id="CHEBI:57783"/>
    </ligand>
</feature>
<feature type="binding site" evidence="1">
    <location>
        <position position="17"/>
    </location>
    <ligand>
        <name>NADPH</name>
        <dbReference type="ChEBI" id="CHEBI:57783"/>
    </ligand>
</feature>
<feature type="binding site" evidence="1">
    <location>
        <position position="18"/>
    </location>
    <ligand>
        <name>NADPH</name>
        <dbReference type="ChEBI" id="CHEBI:57783"/>
    </ligand>
</feature>
<feature type="binding site" evidence="1">
    <location>
        <position position="41"/>
    </location>
    <ligand>
        <name>NADPH</name>
        <dbReference type="ChEBI" id="CHEBI:57783"/>
    </ligand>
</feature>
<feature type="binding site" evidence="1">
    <location>
        <position position="129"/>
    </location>
    <ligand>
        <name>NADPH</name>
        <dbReference type="ChEBI" id="CHEBI:57783"/>
    </ligand>
</feature>
<feature type="binding site" evidence="1">
    <location>
        <position position="130"/>
    </location>
    <ligand>
        <name>1-deoxy-D-xylulose 5-phosphate</name>
        <dbReference type="ChEBI" id="CHEBI:57792"/>
    </ligand>
</feature>
<feature type="binding site" evidence="1">
    <location>
        <position position="131"/>
    </location>
    <ligand>
        <name>NADPH</name>
        <dbReference type="ChEBI" id="CHEBI:57783"/>
    </ligand>
</feature>
<feature type="binding site" evidence="1">
    <location>
        <position position="155"/>
    </location>
    <ligand>
        <name>Mn(2+)</name>
        <dbReference type="ChEBI" id="CHEBI:29035"/>
    </ligand>
</feature>
<feature type="binding site" evidence="1">
    <location>
        <position position="156"/>
    </location>
    <ligand>
        <name>1-deoxy-D-xylulose 5-phosphate</name>
        <dbReference type="ChEBI" id="CHEBI:57792"/>
    </ligand>
</feature>
<feature type="binding site" evidence="1">
    <location>
        <position position="157"/>
    </location>
    <ligand>
        <name>1-deoxy-D-xylulose 5-phosphate</name>
        <dbReference type="ChEBI" id="CHEBI:57792"/>
    </ligand>
</feature>
<feature type="binding site" evidence="1">
    <location>
        <position position="157"/>
    </location>
    <ligand>
        <name>Mn(2+)</name>
        <dbReference type="ChEBI" id="CHEBI:29035"/>
    </ligand>
</feature>
<feature type="binding site" evidence="1">
    <location>
        <position position="182"/>
    </location>
    <ligand>
        <name>1-deoxy-D-xylulose 5-phosphate</name>
        <dbReference type="ChEBI" id="CHEBI:57792"/>
    </ligand>
</feature>
<feature type="binding site" evidence="1">
    <location>
        <position position="205"/>
    </location>
    <ligand>
        <name>1-deoxy-D-xylulose 5-phosphate</name>
        <dbReference type="ChEBI" id="CHEBI:57792"/>
    </ligand>
</feature>
<feature type="binding site" evidence="1">
    <location>
        <position position="211"/>
    </location>
    <ligand>
        <name>NADPH</name>
        <dbReference type="ChEBI" id="CHEBI:57783"/>
    </ligand>
</feature>
<feature type="binding site" evidence="1">
    <location>
        <position position="218"/>
    </location>
    <ligand>
        <name>1-deoxy-D-xylulose 5-phosphate</name>
        <dbReference type="ChEBI" id="CHEBI:57792"/>
    </ligand>
</feature>
<feature type="binding site" evidence="1">
    <location>
        <position position="223"/>
    </location>
    <ligand>
        <name>1-deoxy-D-xylulose 5-phosphate</name>
        <dbReference type="ChEBI" id="CHEBI:57792"/>
    </ligand>
</feature>
<feature type="binding site" evidence="1">
    <location>
        <position position="224"/>
    </location>
    <ligand>
        <name>1-deoxy-D-xylulose 5-phosphate</name>
        <dbReference type="ChEBI" id="CHEBI:57792"/>
    </ligand>
</feature>
<feature type="binding site" evidence="1">
    <location>
        <position position="227"/>
    </location>
    <ligand>
        <name>1-deoxy-D-xylulose 5-phosphate</name>
        <dbReference type="ChEBI" id="CHEBI:57792"/>
    </ligand>
</feature>
<feature type="binding site" evidence="1">
    <location>
        <position position="227"/>
    </location>
    <ligand>
        <name>Mn(2+)</name>
        <dbReference type="ChEBI" id="CHEBI:29035"/>
    </ligand>
</feature>
<protein>
    <recommendedName>
        <fullName evidence="1">1-deoxy-D-xylulose 5-phosphate reductoisomerase</fullName>
        <shortName evidence="1">DXP reductoisomerase</shortName>
        <ecNumber evidence="1">1.1.1.267</ecNumber>
    </recommendedName>
    <alternativeName>
        <fullName evidence="1">1-deoxyxylulose-5-phosphate reductoisomerase</fullName>
    </alternativeName>
    <alternativeName>
        <fullName evidence="1">2-C-methyl-D-erythritol 4-phosphate synthase</fullName>
    </alternativeName>
</protein>
<proteinExistence type="inferred from homology"/>
<gene>
    <name evidence="1" type="primary">dxr</name>
    <name type="ordered locus">xcc-b100_2929</name>
</gene>
<keyword id="KW-0414">Isoprene biosynthesis</keyword>
<keyword id="KW-0464">Manganese</keyword>
<keyword id="KW-0479">Metal-binding</keyword>
<keyword id="KW-0521">NADP</keyword>
<keyword id="KW-0560">Oxidoreductase</keyword>
<name>DXR_XANCB</name>
<evidence type="ECO:0000255" key="1">
    <source>
        <dbReference type="HAMAP-Rule" id="MF_00183"/>
    </source>
</evidence>
<accession>B0RW72</accession>
<dbReference type="EC" id="1.1.1.267" evidence="1"/>
<dbReference type="EMBL" id="AM920689">
    <property type="protein sequence ID" value="CAP52290.1"/>
    <property type="molecule type" value="Genomic_DNA"/>
</dbReference>
<dbReference type="SMR" id="B0RW72"/>
<dbReference type="KEGG" id="xca:xcc-b100_2929"/>
<dbReference type="HOGENOM" id="CLU_035714_0_1_6"/>
<dbReference type="UniPathway" id="UPA00056">
    <property type="reaction ID" value="UER00092"/>
</dbReference>
<dbReference type="Proteomes" id="UP000001188">
    <property type="component" value="Chromosome"/>
</dbReference>
<dbReference type="GO" id="GO:0030604">
    <property type="term" value="F:1-deoxy-D-xylulose-5-phosphate reductoisomerase activity"/>
    <property type="evidence" value="ECO:0007669"/>
    <property type="project" value="UniProtKB-UniRule"/>
</dbReference>
<dbReference type="GO" id="GO:0030145">
    <property type="term" value="F:manganese ion binding"/>
    <property type="evidence" value="ECO:0007669"/>
    <property type="project" value="TreeGrafter"/>
</dbReference>
<dbReference type="GO" id="GO:0070402">
    <property type="term" value="F:NADPH binding"/>
    <property type="evidence" value="ECO:0007669"/>
    <property type="project" value="InterPro"/>
</dbReference>
<dbReference type="GO" id="GO:0051484">
    <property type="term" value="P:isopentenyl diphosphate biosynthetic process, methylerythritol 4-phosphate pathway involved in terpenoid biosynthetic process"/>
    <property type="evidence" value="ECO:0007669"/>
    <property type="project" value="TreeGrafter"/>
</dbReference>
<dbReference type="FunFam" id="3.40.50.720:FF:000045">
    <property type="entry name" value="1-deoxy-D-xylulose 5-phosphate reductoisomerase"/>
    <property type="match status" value="1"/>
</dbReference>
<dbReference type="Gene3D" id="1.10.1740.10">
    <property type="match status" value="1"/>
</dbReference>
<dbReference type="Gene3D" id="3.40.50.720">
    <property type="entry name" value="NAD(P)-binding Rossmann-like Domain"/>
    <property type="match status" value="1"/>
</dbReference>
<dbReference type="HAMAP" id="MF_00183">
    <property type="entry name" value="DXP_reductoisom"/>
    <property type="match status" value="1"/>
</dbReference>
<dbReference type="InterPro" id="IPR003821">
    <property type="entry name" value="DXP_reductoisomerase"/>
</dbReference>
<dbReference type="InterPro" id="IPR013644">
    <property type="entry name" value="DXP_reductoisomerase_C"/>
</dbReference>
<dbReference type="InterPro" id="IPR013512">
    <property type="entry name" value="DXP_reductoisomerase_N"/>
</dbReference>
<dbReference type="InterPro" id="IPR026877">
    <property type="entry name" value="DXPR_C"/>
</dbReference>
<dbReference type="InterPro" id="IPR036169">
    <property type="entry name" value="DXPR_C_sf"/>
</dbReference>
<dbReference type="InterPro" id="IPR036291">
    <property type="entry name" value="NAD(P)-bd_dom_sf"/>
</dbReference>
<dbReference type="NCBIfam" id="TIGR00243">
    <property type="entry name" value="Dxr"/>
    <property type="match status" value="1"/>
</dbReference>
<dbReference type="NCBIfam" id="NF009114">
    <property type="entry name" value="PRK12464.1"/>
    <property type="match status" value="1"/>
</dbReference>
<dbReference type="PANTHER" id="PTHR30525">
    <property type="entry name" value="1-DEOXY-D-XYLULOSE 5-PHOSPHATE REDUCTOISOMERASE"/>
    <property type="match status" value="1"/>
</dbReference>
<dbReference type="PANTHER" id="PTHR30525:SF0">
    <property type="entry name" value="1-DEOXY-D-XYLULOSE 5-PHOSPHATE REDUCTOISOMERASE, CHLOROPLASTIC"/>
    <property type="match status" value="1"/>
</dbReference>
<dbReference type="Pfam" id="PF08436">
    <property type="entry name" value="DXP_redisom_C"/>
    <property type="match status" value="1"/>
</dbReference>
<dbReference type="Pfam" id="PF02670">
    <property type="entry name" value="DXP_reductoisom"/>
    <property type="match status" value="1"/>
</dbReference>
<dbReference type="Pfam" id="PF13288">
    <property type="entry name" value="DXPR_C"/>
    <property type="match status" value="1"/>
</dbReference>
<dbReference type="PIRSF" id="PIRSF006205">
    <property type="entry name" value="Dxp_reductismrs"/>
    <property type="match status" value="1"/>
</dbReference>
<dbReference type="SUPFAM" id="SSF69055">
    <property type="entry name" value="1-deoxy-D-xylulose-5-phosphate reductoisomerase, C-terminal domain"/>
    <property type="match status" value="1"/>
</dbReference>
<dbReference type="SUPFAM" id="SSF55347">
    <property type="entry name" value="Glyceraldehyde-3-phosphate dehydrogenase-like, C-terminal domain"/>
    <property type="match status" value="1"/>
</dbReference>
<dbReference type="SUPFAM" id="SSF51735">
    <property type="entry name" value="NAD(P)-binding Rossmann-fold domains"/>
    <property type="match status" value="1"/>
</dbReference>
<reference key="1">
    <citation type="journal article" date="2008" name="J. Biotechnol.">
        <title>The genome of Xanthomonas campestris pv. campestris B100 and its use for the reconstruction of metabolic pathways involved in xanthan biosynthesis.</title>
        <authorList>
            <person name="Vorhoelter F.-J."/>
            <person name="Schneiker S."/>
            <person name="Goesmann A."/>
            <person name="Krause L."/>
            <person name="Bekel T."/>
            <person name="Kaiser O."/>
            <person name="Linke B."/>
            <person name="Patschkowski T."/>
            <person name="Rueckert C."/>
            <person name="Schmid J."/>
            <person name="Sidhu V.K."/>
            <person name="Sieber V."/>
            <person name="Tauch A."/>
            <person name="Watt S.A."/>
            <person name="Weisshaar B."/>
            <person name="Becker A."/>
            <person name="Niehaus K."/>
            <person name="Puehler A."/>
        </authorList>
    </citation>
    <scope>NUCLEOTIDE SEQUENCE [LARGE SCALE GENOMIC DNA]</scope>
    <source>
        <strain>B100</strain>
    </source>
</reference>